<accession>Q50097</accession>
<evidence type="ECO:0000250" key="1"/>
<evidence type="ECO:0000255" key="2">
    <source>
        <dbReference type="PROSITE-ProRule" id="PRU00441"/>
    </source>
</evidence>
<evidence type="ECO:0000305" key="3"/>
<proteinExistence type="inferred from homology"/>
<feature type="chain" id="PRO_0000060200" description="Phosphate transport system permease protein PstA">
    <location>
        <begin position="1"/>
        <end position="304"/>
    </location>
</feature>
<feature type="transmembrane region" description="Helical" evidence="2">
    <location>
        <begin position="32"/>
        <end position="52"/>
    </location>
</feature>
<feature type="transmembrane region" description="Helical" evidence="2">
    <location>
        <begin position="92"/>
        <end position="112"/>
    </location>
</feature>
<feature type="transmembrane region" description="Helical" evidence="2">
    <location>
        <begin position="128"/>
        <end position="148"/>
    </location>
</feature>
<feature type="transmembrane region" description="Helical" evidence="2">
    <location>
        <begin position="151"/>
        <end position="171"/>
    </location>
</feature>
<feature type="transmembrane region" description="Helical" evidence="2">
    <location>
        <begin position="200"/>
        <end position="220"/>
    </location>
</feature>
<feature type="transmembrane region" description="Helical" evidence="2">
    <location>
        <begin position="272"/>
        <end position="292"/>
    </location>
</feature>
<feature type="domain" description="ABC transmembrane type-1" evidence="2">
    <location>
        <begin position="85"/>
        <end position="289"/>
    </location>
</feature>
<dbReference type="EMBL" id="U15184">
    <property type="protein sequence ID" value="AAA63078.1"/>
    <property type="molecule type" value="Genomic_DNA"/>
</dbReference>
<dbReference type="EMBL" id="AL583924">
    <property type="protein sequence ID" value="CAC31048.1"/>
    <property type="molecule type" value="Genomic_DNA"/>
</dbReference>
<dbReference type="PIR" id="H87170">
    <property type="entry name" value="H87170"/>
</dbReference>
<dbReference type="RefSeq" id="NP_302393.1">
    <property type="nucleotide sequence ID" value="NC_002677.1"/>
</dbReference>
<dbReference type="RefSeq" id="WP_010908713.1">
    <property type="nucleotide sequence ID" value="NC_002677.1"/>
</dbReference>
<dbReference type="SMR" id="Q50097"/>
<dbReference type="STRING" id="272631.gene:17575945"/>
<dbReference type="KEGG" id="mle:ML2093"/>
<dbReference type="PATRIC" id="fig|272631.5.peg.3939"/>
<dbReference type="Leproma" id="ML2093"/>
<dbReference type="eggNOG" id="COG0581">
    <property type="taxonomic scope" value="Bacteria"/>
</dbReference>
<dbReference type="HOGENOM" id="CLU_033621_2_0_11"/>
<dbReference type="OrthoDB" id="9775069at2"/>
<dbReference type="Proteomes" id="UP000000806">
    <property type="component" value="Chromosome"/>
</dbReference>
<dbReference type="GO" id="GO:0005886">
    <property type="term" value="C:plasma membrane"/>
    <property type="evidence" value="ECO:0007669"/>
    <property type="project" value="UniProtKB-SubCell"/>
</dbReference>
<dbReference type="GO" id="GO:0005315">
    <property type="term" value="F:phosphate transmembrane transporter activity"/>
    <property type="evidence" value="ECO:0007669"/>
    <property type="project" value="InterPro"/>
</dbReference>
<dbReference type="GO" id="GO:0035435">
    <property type="term" value="P:phosphate ion transmembrane transport"/>
    <property type="evidence" value="ECO:0007669"/>
    <property type="project" value="InterPro"/>
</dbReference>
<dbReference type="CDD" id="cd06261">
    <property type="entry name" value="TM_PBP2"/>
    <property type="match status" value="1"/>
</dbReference>
<dbReference type="Gene3D" id="1.10.3720.10">
    <property type="entry name" value="MetI-like"/>
    <property type="match status" value="1"/>
</dbReference>
<dbReference type="InterPro" id="IPR000515">
    <property type="entry name" value="MetI-like"/>
</dbReference>
<dbReference type="InterPro" id="IPR035906">
    <property type="entry name" value="MetI-like_sf"/>
</dbReference>
<dbReference type="InterPro" id="IPR005672">
    <property type="entry name" value="Phosphate_PstA"/>
</dbReference>
<dbReference type="InterPro" id="IPR051408">
    <property type="entry name" value="Phosphate_transprt_permease"/>
</dbReference>
<dbReference type="NCBIfam" id="TIGR00974">
    <property type="entry name" value="3a0107s02c"/>
    <property type="match status" value="1"/>
</dbReference>
<dbReference type="PANTHER" id="PTHR42922">
    <property type="entry name" value="PHOSPHATE TRANSPORT SYSTEM PERMEASE PROTEIN PSTA"/>
    <property type="match status" value="1"/>
</dbReference>
<dbReference type="PANTHER" id="PTHR42922:SF1">
    <property type="entry name" value="PHOSPHATE TRANSPORT SYSTEM PERMEASE PROTEIN PSTA"/>
    <property type="match status" value="1"/>
</dbReference>
<dbReference type="Pfam" id="PF00528">
    <property type="entry name" value="BPD_transp_1"/>
    <property type="match status" value="1"/>
</dbReference>
<dbReference type="SUPFAM" id="SSF161098">
    <property type="entry name" value="MetI-like"/>
    <property type="match status" value="1"/>
</dbReference>
<dbReference type="PROSITE" id="PS50928">
    <property type="entry name" value="ABC_TM1"/>
    <property type="match status" value="1"/>
</dbReference>
<organism>
    <name type="scientific">Mycobacterium leprae (strain TN)</name>
    <dbReference type="NCBI Taxonomy" id="272631"/>
    <lineage>
        <taxon>Bacteria</taxon>
        <taxon>Bacillati</taxon>
        <taxon>Actinomycetota</taxon>
        <taxon>Actinomycetes</taxon>
        <taxon>Mycobacteriales</taxon>
        <taxon>Mycobacteriaceae</taxon>
        <taxon>Mycobacterium</taxon>
    </lineage>
</organism>
<sequence>MNLDTLDRPVKAVVLRPISVRRRIKNNVATMFFFTSFLIALVPLVWLLSVVVARGFYAVTRFDWWTHSLRGVMPEEFAGGVYHALYGSLVQAVVAAIMAVPLGSMTAVYLVEYGSGPFVRVTTFMVDVLAGVPSIVAALFIFCLWIATLGFQQSAFAVSLALVLLMLPVVVRSTEEILRLVPDELREACYALGIPKWKTIVRIVFPIATPGIISGVLLSIARVIGETAPVLVLVGYSRSINFDIFDGNMASLPLLIYTELTNPEYAGFLRVWGAALTLIILVAGINLFGAAFRFLATRRCSGCR</sequence>
<protein>
    <recommendedName>
        <fullName>Phosphate transport system permease protein PstA</fullName>
    </recommendedName>
</protein>
<name>PSTA_MYCLE</name>
<keyword id="KW-1003">Cell membrane</keyword>
<keyword id="KW-0472">Membrane</keyword>
<keyword id="KW-0592">Phosphate transport</keyword>
<keyword id="KW-1185">Reference proteome</keyword>
<keyword id="KW-0812">Transmembrane</keyword>
<keyword id="KW-1133">Transmembrane helix</keyword>
<keyword id="KW-0813">Transport</keyword>
<reference key="1">
    <citation type="submission" date="1994-09" db="EMBL/GenBank/DDBJ databases">
        <authorList>
            <person name="Smith D.R."/>
            <person name="Robison K."/>
        </authorList>
    </citation>
    <scope>NUCLEOTIDE SEQUENCE [GENOMIC DNA]</scope>
</reference>
<reference key="2">
    <citation type="journal article" date="2001" name="Nature">
        <title>Massive gene decay in the leprosy bacillus.</title>
        <authorList>
            <person name="Cole S.T."/>
            <person name="Eiglmeier K."/>
            <person name="Parkhill J."/>
            <person name="James K.D."/>
            <person name="Thomson N.R."/>
            <person name="Wheeler P.R."/>
            <person name="Honore N."/>
            <person name="Garnier T."/>
            <person name="Churcher C.M."/>
            <person name="Harris D.E."/>
            <person name="Mungall K.L."/>
            <person name="Basham D."/>
            <person name="Brown D."/>
            <person name="Chillingworth T."/>
            <person name="Connor R."/>
            <person name="Davies R.M."/>
            <person name="Devlin K."/>
            <person name="Duthoy S."/>
            <person name="Feltwell T."/>
            <person name="Fraser A."/>
            <person name="Hamlin N."/>
            <person name="Holroyd S."/>
            <person name="Hornsby T."/>
            <person name="Jagels K."/>
            <person name="Lacroix C."/>
            <person name="Maclean J."/>
            <person name="Moule S."/>
            <person name="Murphy L.D."/>
            <person name="Oliver K."/>
            <person name="Quail M.A."/>
            <person name="Rajandream M.A."/>
            <person name="Rutherford K.M."/>
            <person name="Rutter S."/>
            <person name="Seeger K."/>
            <person name="Simon S."/>
            <person name="Simmonds M."/>
            <person name="Skelton J."/>
            <person name="Squares R."/>
            <person name="Squares S."/>
            <person name="Stevens K."/>
            <person name="Taylor K."/>
            <person name="Whitehead S."/>
            <person name="Woodward J.R."/>
            <person name="Barrell B.G."/>
        </authorList>
    </citation>
    <scope>NUCLEOTIDE SEQUENCE [LARGE SCALE GENOMIC DNA]</scope>
    <source>
        <strain>TN</strain>
    </source>
</reference>
<comment type="function">
    <text evidence="1">Part of the binding-protein-dependent transport system for phosphate; probably responsible for the translocation of the substrate across the membrane.</text>
</comment>
<comment type="subcellular location">
    <subcellularLocation>
        <location evidence="3">Cell membrane</location>
        <topology evidence="3">Multi-pass membrane protein</topology>
    </subcellularLocation>
</comment>
<comment type="similarity">
    <text evidence="3">Belongs to the binding-protein-dependent transport system permease family. CysTW subfamily.</text>
</comment>
<gene>
    <name type="primary">pstA</name>
    <name type="synonym">phoX1</name>
    <name type="synonym">pstA1</name>
    <name type="ordered locus">ML2093</name>
</gene>